<reference key="1">
    <citation type="journal article" date="2010" name="J. Bacteriol.">
        <title>Genome sequence of the deep-rooted Yersinia pestis strain Angola reveals new insights into the evolution and pangenome of the plague bacterium.</title>
        <authorList>
            <person name="Eppinger M."/>
            <person name="Worsham P.L."/>
            <person name="Nikolich M.P."/>
            <person name="Riley D.R."/>
            <person name="Sebastian Y."/>
            <person name="Mou S."/>
            <person name="Achtman M."/>
            <person name="Lindler L.E."/>
            <person name="Ravel J."/>
        </authorList>
    </citation>
    <scope>NUCLEOTIDE SEQUENCE [LARGE SCALE GENOMIC DNA]</scope>
    <source>
        <strain>Angola</strain>
    </source>
</reference>
<name>GLYA_YERPG</name>
<protein>
    <recommendedName>
        <fullName evidence="1">Serine hydroxymethyltransferase</fullName>
        <shortName evidence="1">SHMT</shortName>
        <shortName evidence="1">Serine methylase</shortName>
        <ecNumber evidence="1">2.1.2.1</ecNumber>
    </recommendedName>
</protein>
<feature type="chain" id="PRO_1000091600" description="Serine hydroxymethyltransferase">
    <location>
        <begin position="1"/>
        <end position="417"/>
    </location>
</feature>
<feature type="binding site" evidence="1">
    <location>
        <position position="121"/>
    </location>
    <ligand>
        <name>(6S)-5,6,7,8-tetrahydrofolate</name>
        <dbReference type="ChEBI" id="CHEBI:57453"/>
    </ligand>
</feature>
<feature type="binding site" evidence="1">
    <location>
        <begin position="125"/>
        <end position="127"/>
    </location>
    <ligand>
        <name>(6S)-5,6,7,8-tetrahydrofolate</name>
        <dbReference type="ChEBI" id="CHEBI:57453"/>
    </ligand>
</feature>
<feature type="binding site" evidence="1">
    <location>
        <begin position="355"/>
        <end position="357"/>
    </location>
    <ligand>
        <name>(6S)-5,6,7,8-tetrahydrofolate</name>
        <dbReference type="ChEBI" id="CHEBI:57453"/>
    </ligand>
</feature>
<feature type="site" description="Plays an important role in substrate specificity" evidence="1">
    <location>
        <position position="228"/>
    </location>
</feature>
<feature type="modified residue" description="N6-(pyridoxal phosphate)lysine" evidence="1">
    <location>
        <position position="229"/>
    </location>
</feature>
<evidence type="ECO:0000255" key="1">
    <source>
        <dbReference type="HAMAP-Rule" id="MF_00051"/>
    </source>
</evidence>
<organism>
    <name type="scientific">Yersinia pestis bv. Antiqua (strain Angola)</name>
    <dbReference type="NCBI Taxonomy" id="349746"/>
    <lineage>
        <taxon>Bacteria</taxon>
        <taxon>Pseudomonadati</taxon>
        <taxon>Pseudomonadota</taxon>
        <taxon>Gammaproteobacteria</taxon>
        <taxon>Enterobacterales</taxon>
        <taxon>Yersiniaceae</taxon>
        <taxon>Yersinia</taxon>
    </lineage>
</organism>
<comment type="function">
    <text evidence="1">Catalyzes the reversible interconversion of serine and glycine with tetrahydrofolate (THF) serving as the one-carbon carrier. This reaction serves as the major source of one-carbon groups required for the biosynthesis of purines, thymidylate, methionine, and other important biomolecules. Also exhibits THF-independent aldolase activity toward beta-hydroxyamino acids, producing glycine and aldehydes, via a retro-aldol mechanism.</text>
</comment>
<comment type="catalytic activity">
    <reaction evidence="1">
        <text>(6R)-5,10-methylene-5,6,7,8-tetrahydrofolate + glycine + H2O = (6S)-5,6,7,8-tetrahydrofolate + L-serine</text>
        <dbReference type="Rhea" id="RHEA:15481"/>
        <dbReference type="ChEBI" id="CHEBI:15377"/>
        <dbReference type="ChEBI" id="CHEBI:15636"/>
        <dbReference type="ChEBI" id="CHEBI:33384"/>
        <dbReference type="ChEBI" id="CHEBI:57305"/>
        <dbReference type="ChEBI" id="CHEBI:57453"/>
        <dbReference type="EC" id="2.1.2.1"/>
    </reaction>
</comment>
<comment type="cofactor">
    <cofactor evidence="1">
        <name>pyridoxal 5'-phosphate</name>
        <dbReference type="ChEBI" id="CHEBI:597326"/>
    </cofactor>
</comment>
<comment type="pathway">
    <text evidence="1">One-carbon metabolism; tetrahydrofolate interconversion.</text>
</comment>
<comment type="pathway">
    <text evidence="1">Amino-acid biosynthesis; glycine biosynthesis; glycine from L-serine: step 1/1.</text>
</comment>
<comment type="subunit">
    <text evidence="1">Homodimer.</text>
</comment>
<comment type="subcellular location">
    <subcellularLocation>
        <location evidence="1">Cytoplasm</location>
    </subcellularLocation>
</comment>
<comment type="similarity">
    <text evidence="1">Belongs to the SHMT family.</text>
</comment>
<accession>A9R8C1</accession>
<sequence>MLKREMNIADYDADLWRAMEQEVVRQEEHIELIASENYTSPRVMQAQGSQLTNKYAEGYPGKRYYGGCEYVDVVEQLAIDRAKALFGADYANVQPHSGSQANVAVYSALLKPGDTVLGMNLAHGGHLTHGSPVNFSGKLYNIVPYGIDESGQIDYEDLARQAEIHKPKMIIGGFSAYSGIVDWAKMREIADSIDAWFFVDMAHVAGLVAAGVYPNPVPHAHIVTTTTHKTLAGPRGGLILAKGGDEDLYKKLNSSVFPGNQGGPLMHVIAGKAVALKEAMEPEFKIYQQQVAKNAKAMVAVFLERGYKVVSGGTDNHLFLLDLVDKDITGKDADAALGRANITVNKNSVPNDPKSPFVTSGVRIGSPAITRRGFKEAESRELAGWMCDVLDNINDEATIERVKQKVLAICARLPVYA</sequence>
<proteinExistence type="inferred from homology"/>
<gene>
    <name evidence="1" type="primary">glyA</name>
    <name type="ordered locus">YpAngola_A0445</name>
</gene>
<keyword id="KW-0028">Amino-acid biosynthesis</keyword>
<keyword id="KW-0963">Cytoplasm</keyword>
<keyword id="KW-0554">One-carbon metabolism</keyword>
<keyword id="KW-0663">Pyridoxal phosphate</keyword>
<keyword id="KW-0808">Transferase</keyword>
<dbReference type="EC" id="2.1.2.1" evidence="1"/>
<dbReference type="EMBL" id="CP000901">
    <property type="protein sequence ID" value="ABX85370.1"/>
    <property type="molecule type" value="Genomic_DNA"/>
</dbReference>
<dbReference type="RefSeq" id="WP_002211552.1">
    <property type="nucleotide sequence ID" value="NZ_CP009935.1"/>
</dbReference>
<dbReference type="SMR" id="A9R8C1"/>
<dbReference type="GeneID" id="57975864"/>
<dbReference type="KEGG" id="ypg:YpAngola_A0445"/>
<dbReference type="PATRIC" id="fig|349746.12.peg.1400"/>
<dbReference type="UniPathway" id="UPA00193"/>
<dbReference type="UniPathway" id="UPA00288">
    <property type="reaction ID" value="UER01023"/>
</dbReference>
<dbReference type="GO" id="GO:0005829">
    <property type="term" value="C:cytosol"/>
    <property type="evidence" value="ECO:0007669"/>
    <property type="project" value="TreeGrafter"/>
</dbReference>
<dbReference type="GO" id="GO:0004372">
    <property type="term" value="F:glycine hydroxymethyltransferase activity"/>
    <property type="evidence" value="ECO:0007669"/>
    <property type="project" value="UniProtKB-UniRule"/>
</dbReference>
<dbReference type="GO" id="GO:0030170">
    <property type="term" value="F:pyridoxal phosphate binding"/>
    <property type="evidence" value="ECO:0007669"/>
    <property type="project" value="UniProtKB-UniRule"/>
</dbReference>
<dbReference type="GO" id="GO:0019264">
    <property type="term" value="P:glycine biosynthetic process from serine"/>
    <property type="evidence" value="ECO:0007669"/>
    <property type="project" value="UniProtKB-UniRule"/>
</dbReference>
<dbReference type="GO" id="GO:0035999">
    <property type="term" value="P:tetrahydrofolate interconversion"/>
    <property type="evidence" value="ECO:0007669"/>
    <property type="project" value="UniProtKB-UniRule"/>
</dbReference>
<dbReference type="CDD" id="cd00378">
    <property type="entry name" value="SHMT"/>
    <property type="match status" value="1"/>
</dbReference>
<dbReference type="FunFam" id="3.40.640.10:FF:000001">
    <property type="entry name" value="Serine hydroxymethyltransferase"/>
    <property type="match status" value="1"/>
</dbReference>
<dbReference type="FunFam" id="3.90.1150.10:FF:000003">
    <property type="entry name" value="Serine hydroxymethyltransferase"/>
    <property type="match status" value="1"/>
</dbReference>
<dbReference type="Gene3D" id="3.90.1150.10">
    <property type="entry name" value="Aspartate Aminotransferase, domain 1"/>
    <property type="match status" value="1"/>
</dbReference>
<dbReference type="Gene3D" id="3.40.640.10">
    <property type="entry name" value="Type I PLP-dependent aspartate aminotransferase-like (Major domain)"/>
    <property type="match status" value="1"/>
</dbReference>
<dbReference type="HAMAP" id="MF_00051">
    <property type="entry name" value="SHMT"/>
    <property type="match status" value="1"/>
</dbReference>
<dbReference type="InterPro" id="IPR015424">
    <property type="entry name" value="PyrdxlP-dep_Trfase"/>
</dbReference>
<dbReference type="InterPro" id="IPR015421">
    <property type="entry name" value="PyrdxlP-dep_Trfase_major"/>
</dbReference>
<dbReference type="InterPro" id="IPR015422">
    <property type="entry name" value="PyrdxlP-dep_Trfase_small"/>
</dbReference>
<dbReference type="InterPro" id="IPR001085">
    <property type="entry name" value="Ser_HO-MeTrfase"/>
</dbReference>
<dbReference type="InterPro" id="IPR049943">
    <property type="entry name" value="Ser_HO-MeTrfase-like"/>
</dbReference>
<dbReference type="InterPro" id="IPR019798">
    <property type="entry name" value="Ser_HO-MeTrfase_PLP_BS"/>
</dbReference>
<dbReference type="InterPro" id="IPR039429">
    <property type="entry name" value="SHMT-like_dom"/>
</dbReference>
<dbReference type="NCBIfam" id="NF000586">
    <property type="entry name" value="PRK00011.1"/>
    <property type="match status" value="1"/>
</dbReference>
<dbReference type="PANTHER" id="PTHR11680">
    <property type="entry name" value="SERINE HYDROXYMETHYLTRANSFERASE"/>
    <property type="match status" value="1"/>
</dbReference>
<dbReference type="PANTHER" id="PTHR11680:SF50">
    <property type="entry name" value="SERINE HYDROXYMETHYLTRANSFERASE"/>
    <property type="match status" value="1"/>
</dbReference>
<dbReference type="Pfam" id="PF00464">
    <property type="entry name" value="SHMT"/>
    <property type="match status" value="1"/>
</dbReference>
<dbReference type="PIRSF" id="PIRSF000412">
    <property type="entry name" value="SHMT"/>
    <property type="match status" value="1"/>
</dbReference>
<dbReference type="SUPFAM" id="SSF53383">
    <property type="entry name" value="PLP-dependent transferases"/>
    <property type="match status" value="1"/>
</dbReference>
<dbReference type="PROSITE" id="PS00096">
    <property type="entry name" value="SHMT"/>
    <property type="match status" value="1"/>
</dbReference>